<gene>
    <name evidence="1" type="primary">grpE</name>
    <name type="ordered locus">Pnec_1485</name>
</gene>
<protein>
    <recommendedName>
        <fullName evidence="1">Protein GrpE</fullName>
    </recommendedName>
    <alternativeName>
        <fullName evidence="1">HSP-70 cofactor</fullName>
    </alternativeName>
</protein>
<proteinExistence type="inferred from homology"/>
<evidence type="ECO:0000255" key="1">
    <source>
        <dbReference type="HAMAP-Rule" id="MF_01151"/>
    </source>
</evidence>
<evidence type="ECO:0000256" key="2">
    <source>
        <dbReference type="SAM" id="MobiDB-lite"/>
    </source>
</evidence>
<name>GRPE_POLNS</name>
<reference key="1">
    <citation type="journal article" date="2013" name="Proc. Natl. Acad. Sci. U.S.A.">
        <title>Polynucleobacter necessarius, a model for genome reduction in both free-living and symbiotic bacteria.</title>
        <authorList>
            <person name="Boscaro V."/>
            <person name="Felletti M."/>
            <person name="Vannini C."/>
            <person name="Ackerman M.S."/>
            <person name="Chain P.S."/>
            <person name="Malfatti S."/>
            <person name="Vergez L.M."/>
            <person name="Shin M."/>
            <person name="Doak T.G."/>
            <person name="Lynch M."/>
            <person name="Petroni G."/>
        </authorList>
    </citation>
    <scope>NUCLEOTIDE SEQUENCE [LARGE SCALE GENOMIC DNA]</scope>
    <source>
        <strain>STIR1</strain>
    </source>
</reference>
<comment type="function">
    <text evidence="1">Participates actively in the response to hyperosmotic and heat shock by preventing the aggregation of stress-denatured proteins, in association with DnaK and GrpE. It is the nucleotide exchange factor for DnaK and may function as a thermosensor. Unfolded proteins bind initially to DnaJ; upon interaction with the DnaJ-bound protein, DnaK hydrolyzes its bound ATP, resulting in the formation of a stable complex. GrpE releases ADP from DnaK; ATP binding to DnaK triggers the release of the substrate protein, thus completing the reaction cycle. Several rounds of ATP-dependent interactions between DnaJ, DnaK and GrpE are required for fully efficient folding.</text>
</comment>
<comment type="subunit">
    <text evidence="1">Homodimer.</text>
</comment>
<comment type="subcellular location">
    <subcellularLocation>
        <location evidence="1">Cytoplasm</location>
    </subcellularLocation>
</comment>
<comment type="similarity">
    <text evidence="1">Belongs to the GrpE family.</text>
</comment>
<dbReference type="EMBL" id="CP001010">
    <property type="protein sequence ID" value="ACB44577.1"/>
    <property type="molecule type" value="Genomic_DNA"/>
</dbReference>
<dbReference type="SMR" id="B1XRU2"/>
<dbReference type="STRING" id="452638.Pnec_1485"/>
<dbReference type="KEGG" id="pne:Pnec_1485"/>
<dbReference type="eggNOG" id="COG0576">
    <property type="taxonomic scope" value="Bacteria"/>
</dbReference>
<dbReference type="HOGENOM" id="CLU_057217_6_1_4"/>
<dbReference type="OrthoDB" id="9789811at2"/>
<dbReference type="GO" id="GO:0005829">
    <property type="term" value="C:cytosol"/>
    <property type="evidence" value="ECO:0007669"/>
    <property type="project" value="TreeGrafter"/>
</dbReference>
<dbReference type="GO" id="GO:0000774">
    <property type="term" value="F:adenyl-nucleotide exchange factor activity"/>
    <property type="evidence" value="ECO:0007669"/>
    <property type="project" value="InterPro"/>
</dbReference>
<dbReference type="GO" id="GO:0042803">
    <property type="term" value="F:protein homodimerization activity"/>
    <property type="evidence" value="ECO:0007669"/>
    <property type="project" value="InterPro"/>
</dbReference>
<dbReference type="GO" id="GO:0051087">
    <property type="term" value="F:protein-folding chaperone binding"/>
    <property type="evidence" value="ECO:0007669"/>
    <property type="project" value="InterPro"/>
</dbReference>
<dbReference type="GO" id="GO:0051082">
    <property type="term" value="F:unfolded protein binding"/>
    <property type="evidence" value="ECO:0007669"/>
    <property type="project" value="TreeGrafter"/>
</dbReference>
<dbReference type="GO" id="GO:0006457">
    <property type="term" value="P:protein folding"/>
    <property type="evidence" value="ECO:0007669"/>
    <property type="project" value="InterPro"/>
</dbReference>
<dbReference type="CDD" id="cd00446">
    <property type="entry name" value="GrpE"/>
    <property type="match status" value="1"/>
</dbReference>
<dbReference type="FunFam" id="2.30.22.10:FF:000001">
    <property type="entry name" value="Protein GrpE"/>
    <property type="match status" value="1"/>
</dbReference>
<dbReference type="Gene3D" id="3.90.20.20">
    <property type="match status" value="1"/>
</dbReference>
<dbReference type="Gene3D" id="2.30.22.10">
    <property type="entry name" value="Head domain of nucleotide exchange factor GrpE"/>
    <property type="match status" value="1"/>
</dbReference>
<dbReference type="HAMAP" id="MF_01151">
    <property type="entry name" value="GrpE"/>
    <property type="match status" value="1"/>
</dbReference>
<dbReference type="InterPro" id="IPR000740">
    <property type="entry name" value="GrpE"/>
</dbReference>
<dbReference type="InterPro" id="IPR013805">
    <property type="entry name" value="GrpE_coiled_coil"/>
</dbReference>
<dbReference type="InterPro" id="IPR009012">
    <property type="entry name" value="GrpE_head"/>
</dbReference>
<dbReference type="NCBIfam" id="NF010737">
    <property type="entry name" value="PRK14139.1"/>
    <property type="match status" value="1"/>
</dbReference>
<dbReference type="NCBIfam" id="NF010738">
    <property type="entry name" value="PRK14140.1"/>
    <property type="match status" value="1"/>
</dbReference>
<dbReference type="NCBIfam" id="NF010748">
    <property type="entry name" value="PRK14150.1"/>
    <property type="match status" value="1"/>
</dbReference>
<dbReference type="PANTHER" id="PTHR21237">
    <property type="entry name" value="GRPE PROTEIN"/>
    <property type="match status" value="1"/>
</dbReference>
<dbReference type="PANTHER" id="PTHR21237:SF23">
    <property type="entry name" value="GRPE PROTEIN HOMOLOG, MITOCHONDRIAL"/>
    <property type="match status" value="1"/>
</dbReference>
<dbReference type="Pfam" id="PF01025">
    <property type="entry name" value="GrpE"/>
    <property type="match status" value="1"/>
</dbReference>
<dbReference type="PRINTS" id="PR00773">
    <property type="entry name" value="GRPEPROTEIN"/>
</dbReference>
<dbReference type="SUPFAM" id="SSF58014">
    <property type="entry name" value="Coiled-coil domain of nucleotide exchange factor GrpE"/>
    <property type="match status" value="1"/>
</dbReference>
<dbReference type="SUPFAM" id="SSF51064">
    <property type="entry name" value="Head domain of nucleotide exchange factor GrpE"/>
    <property type="match status" value="1"/>
</dbReference>
<dbReference type="PROSITE" id="PS01071">
    <property type="entry name" value="GRPE"/>
    <property type="match status" value="1"/>
</dbReference>
<sequence>MTQENQTPPPEQENLAADPAVETTAETPAVKTPEQEVAELNQKIGELQDNFLRAKAEGENIRRRAVEDIAKAHKFAIESFAEHLVPVTDSLYAALNTDAGDAKAFKEGLEITLKQLLSAFEKGRMTEINPAVGDKFDPHHHQAIASVPSEQESNTVVSVLQRGYTVADRVLRPALVTVSAPK</sequence>
<feature type="chain" id="PRO_1000137593" description="Protein GrpE">
    <location>
        <begin position="1"/>
        <end position="182"/>
    </location>
</feature>
<feature type="region of interest" description="Disordered" evidence="2">
    <location>
        <begin position="1"/>
        <end position="35"/>
    </location>
</feature>
<organism>
    <name type="scientific">Polynucleobacter necessarius subsp. necessarius (strain STIR1)</name>
    <dbReference type="NCBI Taxonomy" id="452638"/>
    <lineage>
        <taxon>Bacteria</taxon>
        <taxon>Pseudomonadati</taxon>
        <taxon>Pseudomonadota</taxon>
        <taxon>Betaproteobacteria</taxon>
        <taxon>Burkholderiales</taxon>
        <taxon>Burkholderiaceae</taxon>
        <taxon>Polynucleobacter</taxon>
    </lineage>
</organism>
<keyword id="KW-0143">Chaperone</keyword>
<keyword id="KW-0963">Cytoplasm</keyword>
<keyword id="KW-0346">Stress response</keyword>
<accession>B1XRU2</accession>